<accession>Q15ZS0</accession>
<proteinExistence type="inferred from homology"/>
<keyword id="KW-0021">Allosteric enzyme</keyword>
<keyword id="KW-0328">Glycosyltransferase</keyword>
<keyword id="KW-0342">GTP-binding</keyword>
<keyword id="KW-0460">Magnesium</keyword>
<keyword id="KW-0547">Nucleotide-binding</keyword>
<keyword id="KW-0808">Transferase</keyword>
<gene>
    <name evidence="1" type="primary">upp</name>
    <name type="ordered locus">Patl_0086</name>
</gene>
<reference key="1">
    <citation type="submission" date="2006-06" db="EMBL/GenBank/DDBJ databases">
        <title>Complete sequence of Pseudoalteromonas atlantica T6c.</title>
        <authorList>
            <consortium name="US DOE Joint Genome Institute"/>
            <person name="Copeland A."/>
            <person name="Lucas S."/>
            <person name="Lapidus A."/>
            <person name="Barry K."/>
            <person name="Detter J.C."/>
            <person name="Glavina del Rio T."/>
            <person name="Hammon N."/>
            <person name="Israni S."/>
            <person name="Dalin E."/>
            <person name="Tice H."/>
            <person name="Pitluck S."/>
            <person name="Saunders E."/>
            <person name="Brettin T."/>
            <person name="Bruce D."/>
            <person name="Han C."/>
            <person name="Tapia R."/>
            <person name="Gilna P."/>
            <person name="Schmutz J."/>
            <person name="Larimer F."/>
            <person name="Land M."/>
            <person name="Hauser L."/>
            <person name="Kyrpides N."/>
            <person name="Kim E."/>
            <person name="Karls A.C."/>
            <person name="Bartlett D."/>
            <person name="Higgins B.P."/>
            <person name="Richardson P."/>
        </authorList>
    </citation>
    <scope>NUCLEOTIDE SEQUENCE [LARGE SCALE GENOMIC DNA]</scope>
    <source>
        <strain>T6c / ATCC BAA-1087</strain>
    </source>
</reference>
<protein>
    <recommendedName>
        <fullName evidence="1">Uracil phosphoribosyltransferase</fullName>
        <ecNumber evidence="1">2.4.2.9</ecNumber>
    </recommendedName>
    <alternativeName>
        <fullName evidence="1">UMP pyrophosphorylase</fullName>
    </alternativeName>
    <alternativeName>
        <fullName evidence="1">UPRTase</fullName>
    </alternativeName>
</protein>
<dbReference type="EC" id="2.4.2.9" evidence="1"/>
<dbReference type="EMBL" id="CP000388">
    <property type="protein sequence ID" value="ABG38618.1"/>
    <property type="molecule type" value="Genomic_DNA"/>
</dbReference>
<dbReference type="RefSeq" id="WP_011573027.1">
    <property type="nucleotide sequence ID" value="NC_008228.1"/>
</dbReference>
<dbReference type="SMR" id="Q15ZS0"/>
<dbReference type="STRING" id="342610.Patl_0086"/>
<dbReference type="KEGG" id="pat:Patl_0086"/>
<dbReference type="eggNOG" id="COG0035">
    <property type="taxonomic scope" value="Bacteria"/>
</dbReference>
<dbReference type="HOGENOM" id="CLU_067096_2_2_6"/>
<dbReference type="OrthoDB" id="9781675at2"/>
<dbReference type="UniPathway" id="UPA00574">
    <property type="reaction ID" value="UER00636"/>
</dbReference>
<dbReference type="Proteomes" id="UP000001981">
    <property type="component" value="Chromosome"/>
</dbReference>
<dbReference type="GO" id="GO:0005525">
    <property type="term" value="F:GTP binding"/>
    <property type="evidence" value="ECO:0007669"/>
    <property type="project" value="UniProtKB-KW"/>
</dbReference>
<dbReference type="GO" id="GO:0000287">
    <property type="term" value="F:magnesium ion binding"/>
    <property type="evidence" value="ECO:0007669"/>
    <property type="project" value="UniProtKB-UniRule"/>
</dbReference>
<dbReference type="GO" id="GO:0004845">
    <property type="term" value="F:uracil phosphoribosyltransferase activity"/>
    <property type="evidence" value="ECO:0007669"/>
    <property type="project" value="UniProtKB-UniRule"/>
</dbReference>
<dbReference type="GO" id="GO:0044206">
    <property type="term" value="P:UMP salvage"/>
    <property type="evidence" value="ECO:0007669"/>
    <property type="project" value="UniProtKB-UniRule"/>
</dbReference>
<dbReference type="GO" id="GO:0006223">
    <property type="term" value="P:uracil salvage"/>
    <property type="evidence" value="ECO:0007669"/>
    <property type="project" value="InterPro"/>
</dbReference>
<dbReference type="CDD" id="cd06223">
    <property type="entry name" value="PRTases_typeI"/>
    <property type="match status" value="1"/>
</dbReference>
<dbReference type="FunFam" id="3.40.50.2020:FF:000003">
    <property type="entry name" value="Uracil phosphoribosyltransferase"/>
    <property type="match status" value="1"/>
</dbReference>
<dbReference type="Gene3D" id="3.40.50.2020">
    <property type="match status" value="1"/>
</dbReference>
<dbReference type="HAMAP" id="MF_01218_B">
    <property type="entry name" value="Upp_B"/>
    <property type="match status" value="1"/>
</dbReference>
<dbReference type="InterPro" id="IPR000836">
    <property type="entry name" value="PRibTrfase_dom"/>
</dbReference>
<dbReference type="InterPro" id="IPR029057">
    <property type="entry name" value="PRTase-like"/>
</dbReference>
<dbReference type="InterPro" id="IPR034332">
    <property type="entry name" value="Upp_B"/>
</dbReference>
<dbReference type="InterPro" id="IPR050054">
    <property type="entry name" value="UPRTase/APRTase"/>
</dbReference>
<dbReference type="InterPro" id="IPR005765">
    <property type="entry name" value="Ura_phspho_trans"/>
</dbReference>
<dbReference type="NCBIfam" id="NF001097">
    <property type="entry name" value="PRK00129.1"/>
    <property type="match status" value="1"/>
</dbReference>
<dbReference type="NCBIfam" id="TIGR01091">
    <property type="entry name" value="upp"/>
    <property type="match status" value="1"/>
</dbReference>
<dbReference type="PANTHER" id="PTHR32315">
    <property type="entry name" value="ADENINE PHOSPHORIBOSYLTRANSFERASE"/>
    <property type="match status" value="1"/>
</dbReference>
<dbReference type="PANTHER" id="PTHR32315:SF4">
    <property type="entry name" value="URACIL PHOSPHORIBOSYLTRANSFERASE, CHLOROPLASTIC"/>
    <property type="match status" value="1"/>
</dbReference>
<dbReference type="Pfam" id="PF14681">
    <property type="entry name" value="UPRTase"/>
    <property type="match status" value="1"/>
</dbReference>
<dbReference type="SUPFAM" id="SSF53271">
    <property type="entry name" value="PRTase-like"/>
    <property type="match status" value="1"/>
</dbReference>
<comment type="function">
    <text evidence="1">Catalyzes the conversion of uracil and 5-phospho-alpha-D-ribose 1-diphosphate (PRPP) to UMP and diphosphate.</text>
</comment>
<comment type="catalytic activity">
    <reaction evidence="1">
        <text>UMP + diphosphate = 5-phospho-alpha-D-ribose 1-diphosphate + uracil</text>
        <dbReference type="Rhea" id="RHEA:13017"/>
        <dbReference type="ChEBI" id="CHEBI:17568"/>
        <dbReference type="ChEBI" id="CHEBI:33019"/>
        <dbReference type="ChEBI" id="CHEBI:57865"/>
        <dbReference type="ChEBI" id="CHEBI:58017"/>
        <dbReference type="EC" id="2.4.2.9"/>
    </reaction>
</comment>
<comment type="cofactor">
    <cofactor evidence="1">
        <name>Mg(2+)</name>
        <dbReference type="ChEBI" id="CHEBI:18420"/>
    </cofactor>
    <text evidence="1">Binds 1 Mg(2+) ion per subunit. The magnesium is bound as Mg-PRPP.</text>
</comment>
<comment type="activity regulation">
    <text evidence="1">Allosterically activated by GTP.</text>
</comment>
<comment type="pathway">
    <text evidence="1">Pyrimidine metabolism; UMP biosynthesis via salvage pathway; UMP from uracil: step 1/1.</text>
</comment>
<comment type="similarity">
    <text evidence="1">Belongs to the UPRTase family.</text>
</comment>
<evidence type="ECO:0000255" key="1">
    <source>
        <dbReference type="HAMAP-Rule" id="MF_01218"/>
    </source>
</evidence>
<organism>
    <name type="scientific">Pseudoalteromonas atlantica (strain T6c / ATCC BAA-1087)</name>
    <dbReference type="NCBI Taxonomy" id="3042615"/>
    <lineage>
        <taxon>Bacteria</taxon>
        <taxon>Pseudomonadati</taxon>
        <taxon>Pseudomonadota</taxon>
        <taxon>Gammaproteobacteria</taxon>
        <taxon>Alteromonadales</taxon>
        <taxon>Alteromonadaceae</taxon>
        <taxon>Paraglaciecola</taxon>
    </lineage>
</organism>
<name>UPP_PSEA6</name>
<sequence length="209" mass="22857">MSVKEINHPLVQHKLGLMREAGISSKNFRELASEVGNLLTYEATRELETETVEINGWNDQPIKVKKIKGKKITIVPILRAGLGMLDGVMQLIPNAKVSVVGLYRDEETLQPVAYFDKVVKDVEERTALIVDPMLATGGTLIATIDLLKEKGCQHIMGLFLVAAPEGIEAVVSKHPDVDIYTAAVDDKLNEHGYILPGLGDAGDKIFGTR</sequence>
<feature type="chain" id="PRO_1000053758" description="Uracil phosphoribosyltransferase">
    <location>
        <begin position="1"/>
        <end position="209"/>
    </location>
</feature>
<feature type="binding site" evidence="1">
    <location>
        <position position="79"/>
    </location>
    <ligand>
        <name>5-phospho-alpha-D-ribose 1-diphosphate</name>
        <dbReference type="ChEBI" id="CHEBI:58017"/>
    </ligand>
</feature>
<feature type="binding site" evidence="1">
    <location>
        <position position="104"/>
    </location>
    <ligand>
        <name>5-phospho-alpha-D-ribose 1-diphosphate</name>
        <dbReference type="ChEBI" id="CHEBI:58017"/>
    </ligand>
</feature>
<feature type="binding site" evidence="1">
    <location>
        <begin position="131"/>
        <end position="139"/>
    </location>
    <ligand>
        <name>5-phospho-alpha-D-ribose 1-diphosphate</name>
        <dbReference type="ChEBI" id="CHEBI:58017"/>
    </ligand>
</feature>
<feature type="binding site" evidence="1">
    <location>
        <position position="194"/>
    </location>
    <ligand>
        <name>uracil</name>
        <dbReference type="ChEBI" id="CHEBI:17568"/>
    </ligand>
</feature>
<feature type="binding site" evidence="1">
    <location>
        <begin position="199"/>
        <end position="201"/>
    </location>
    <ligand>
        <name>uracil</name>
        <dbReference type="ChEBI" id="CHEBI:17568"/>
    </ligand>
</feature>
<feature type="binding site" evidence="1">
    <location>
        <position position="200"/>
    </location>
    <ligand>
        <name>5-phospho-alpha-D-ribose 1-diphosphate</name>
        <dbReference type="ChEBI" id="CHEBI:58017"/>
    </ligand>
</feature>